<evidence type="ECO:0000250" key="1">
    <source>
        <dbReference type="UniProtKB" id="Q564G3"/>
    </source>
</evidence>
<evidence type="ECO:0000250" key="2">
    <source>
        <dbReference type="UniProtKB" id="Q6QHC5"/>
    </source>
</evidence>
<evidence type="ECO:0000250" key="3">
    <source>
        <dbReference type="UniProtKB" id="Q8R2F2"/>
    </source>
</evidence>
<evidence type="ECO:0000255" key="4"/>
<evidence type="ECO:0000305" key="5"/>
<evidence type="ECO:0000312" key="6">
    <source>
        <dbReference type="EMBL" id="AAI22777.1"/>
    </source>
</evidence>
<proteinExistence type="evidence at transcript level"/>
<keyword id="KW-0256">Endoplasmic reticulum</keyword>
<keyword id="KW-0444">Lipid biosynthesis</keyword>
<keyword id="KW-0443">Lipid metabolism</keyword>
<keyword id="KW-0449">Lipoprotein</keyword>
<keyword id="KW-0472">Membrane</keyword>
<keyword id="KW-0519">Myristate</keyword>
<keyword id="KW-0560">Oxidoreductase</keyword>
<keyword id="KW-1185">Reference proteome</keyword>
<keyword id="KW-0812">Transmembrane</keyword>
<keyword id="KW-1133">Transmembrane helix</keyword>
<organism>
    <name type="scientific">Bos taurus</name>
    <name type="common">Bovine</name>
    <dbReference type="NCBI Taxonomy" id="9913"/>
    <lineage>
        <taxon>Eukaryota</taxon>
        <taxon>Metazoa</taxon>
        <taxon>Chordata</taxon>
        <taxon>Craniata</taxon>
        <taxon>Vertebrata</taxon>
        <taxon>Euteleostomi</taxon>
        <taxon>Mammalia</taxon>
        <taxon>Eutheria</taxon>
        <taxon>Laurasiatheria</taxon>
        <taxon>Artiodactyla</taxon>
        <taxon>Ruminantia</taxon>
        <taxon>Pecora</taxon>
        <taxon>Bovidae</taxon>
        <taxon>Bovinae</taxon>
        <taxon>Bos</taxon>
    </lineage>
</organism>
<reference key="1">
    <citation type="submission" date="2006-08" db="EMBL/GenBank/DDBJ databases">
        <authorList>
            <consortium name="NIH - Mammalian Gene Collection (MGC) project"/>
        </authorList>
    </citation>
    <scope>NUCLEOTIDE SEQUENCE [LARGE SCALE MRNA]</scope>
    <source>
        <strain evidence="6">Crossbred X Angus</strain>
        <tissue evidence="6">Ileum</tissue>
    </source>
</reference>
<dbReference type="EC" id="1.14.18.5"/>
<dbReference type="EC" id="1.14.19.17"/>
<dbReference type="EMBL" id="BC122776">
    <property type="protein sequence ID" value="AAI22777.1"/>
    <property type="molecule type" value="mRNA"/>
</dbReference>
<dbReference type="RefSeq" id="NP_001069719.1">
    <property type="nucleotide sequence ID" value="NM_001076251.2"/>
</dbReference>
<dbReference type="FunCoup" id="Q0II71">
    <property type="interactions" value="480"/>
</dbReference>
<dbReference type="STRING" id="9913.ENSBTAP00000012243"/>
<dbReference type="PaxDb" id="9913-ENSBTAP00000012243"/>
<dbReference type="Ensembl" id="ENSBTAT00000012243.4">
    <property type="protein sequence ID" value="ENSBTAP00000012243.3"/>
    <property type="gene ID" value="ENSBTAG00000009294.5"/>
</dbReference>
<dbReference type="GeneID" id="540994"/>
<dbReference type="KEGG" id="bta:540994"/>
<dbReference type="CTD" id="123099"/>
<dbReference type="VEuPathDB" id="HostDB:ENSBTAG00000009294"/>
<dbReference type="VGNC" id="VGNC:27991">
    <property type="gene designation" value="DEGS2"/>
</dbReference>
<dbReference type="eggNOG" id="KOG2987">
    <property type="taxonomic scope" value="Eukaryota"/>
</dbReference>
<dbReference type="GeneTree" id="ENSGT00390000013448"/>
<dbReference type="HOGENOM" id="CLU_032156_0_0_1"/>
<dbReference type="InParanoid" id="Q0II71"/>
<dbReference type="OMA" id="FEGWLFC"/>
<dbReference type="OrthoDB" id="200948at2759"/>
<dbReference type="TreeFam" id="TF313582"/>
<dbReference type="Reactome" id="R-BTA-1660661">
    <property type="pathway name" value="Sphingolipid de novo biosynthesis"/>
</dbReference>
<dbReference type="UniPathway" id="UPA00786"/>
<dbReference type="Proteomes" id="UP000009136">
    <property type="component" value="Chromosome 21"/>
</dbReference>
<dbReference type="Bgee" id="ENSBTAG00000009294">
    <property type="expression patterns" value="Expressed in esophagus and 88 other cell types or tissues"/>
</dbReference>
<dbReference type="GO" id="GO:0005789">
    <property type="term" value="C:endoplasmic reticulum membrane"/>
    <property type="evidence" value="ECO:0007669"/>
    <property type="project" value="UniProtKB-SubCell"/>
</dbReference>
<dbReference type="GO" id="GO:0102772">
    <property type="term" value="F:sphingolipid C4-monooxygenase activity"/>
    <property type="evidence" value="ECO:0007669"/>
    <property type="project" value="UniProtKB-EC"/>
</dbReference>
<dbReference type="GO" id="GO:0042284">
    <property type="term" value="F:sphingolipid delta-4 desaturase activity"/>
    <property type="evidence" value="ECO:0000318"/>
    <property type="project" value="GO_Central"/>
</dbReference>
<dbReference type="GO" id="GO:0046513">
    <property type="term" value="P:ceramide biosynthetic process"/>
    <property type="evidence" value="ECO:0000318"/>
    <property type="project" value="GO_Central"/>
</dbReference>
<dbReference type="GO" id="GO:0006667">
    <property type="term" value="P:sphinganine metabolic process"/>
    <property type="evidence" value="ECO:0000318"/>
    <property type="project" value="GO_Central"/>
</dbReference>
<dbReference type="CDD" id="cd03508">
    <property type="entry name" value="Delta4-sphingolipid-FADS-like"/>
    <property type="match status" value="1"/>
</dbReference>
<dbReference type="InterPro" id="IPR011388">
    <property type="entry name" value="DES1/DES2"/>
</dbReference>
<dbReference type="InterPro" id="IPR005804">
    <property type="entry name" value="FA_desaturase_dom"/>
</dbReference>
<dbReference type="InterPro" id="IPR013866">
    <property type="entry name" value="Sphingolipid_d4-desaturase_N"/>
</dbReference>
<dbReference type="PANTHER" id="PTHR12879">
    <property type="entry name" value="SPHINGOLIPID DELTA 4 DESATURASE/C-4 HYDROXYLASE PROTEIN DES2"/>
    <property type="match status" value="1"/>
</dbReference>
<dbReference type="PANTHER" id="PTHR12879:SF21">
    <property type="entry name" value="SPHINGOLIPID DELTA(4)-DESATURASE_C4-MONOOXYGENASE DES2"/>
    <property type="match status" value="1"/>
</dbReference>
<dbReference type="Pfam" id="PF00487">
    <property type="entry name" value="FA_desaturase"/>
    <property type="match status" value="1"/>
</dbReference>
<dbReference type="Pfam" id="PF08557">
    <property type="entry name" value="Lipid_DES"/>
    <property type="match status" value="1"/>
</dbReference>
<dbReference type="PIRSF" id="PIRSF017228">
    <property type="entry name" value="Sphnglp_dlt4_des"/>
    <property type="match status" value="1"/>
</dbReference>
<dbReference type="SMART" id="SM01269">
    <property type="entry name" value="Lipid_DES"/>
    <property type="match status" value="1"/>
</dbReference>
<comment type="function">
    <text evidence="3">Bifunctional enzyme which acts both as a sphingolipid delta(4)-desaturase and a sphingolipid C4-monooxygenase.</text>
</comment>
<comment type="catalytic activity">
    <reaction evidence="3">
        <text>a dihydroceramide + 2 Fe(II)-[cytochrome b5] + O2 + 2 H(+) = a phytoceramide + 2 Fe(III)-[cytochrome b5] + H2O</text>
        <dbReference type="Rhea" id="RHEA:55808"/>
        <dbReference type="Rhea" id="RHEA-COMP:10438"/>
        <dbReference type="Rhea" id="RHEA-COMP:10439"/>
        <dbReference type="ChEBI" id="CHEBI:15377"/>
        <dbReference type="ChEBI" id="CHEBI:15378"/>
        <dbReference type="ChEBI" id="CHEBI:15379"/>
        <dbReference type="ChEBI" id="CHEBI:29033"/>
        <dbReference type="ChEBI" id="CHEBI:29034"/>
        <dbReference type="ChEBI" id="CHEBI:139048"/>
        <dbReference type="ChEBI" id="CHEBI:139051"/>
        <dbReference type="EC" id="1.14.18.5"/>
    </reaction>
</comment>
<comment type="catalytic activity">
    <reaction evidence="3">
        <text>an N-acylsphinganine + 2 Fe(II)-[cytochrome b5] + O2 + 2 H(+) = an N-acylsphing-4-enine + 2 Fe(III)-[cytochrome b5] + 2 H2O</text>
        <dbReference type="Rhea" id="RHEA:46544"/>
        <dbReference type="Rhea" id="RHEA-COMP:10438"/>
        <dbReference type="Rhea" id="RHEA-COMP:10439"/>
        <dbReference type="ChEBI" id="CHEBI:15377"/>
        <dbReference type="ChEBI" id="CHEBI:15378"/>
        <dbReference type="ChEBI" id="CHEBI:15379"/>
        <dbReference type="ChEBI" id="CHEBI:29033"/>
        <dbReference type="ChEBI" id="CHEBI:29034"/>
        <dbReference type="ChEBI" id="CHEBI:31488"/>
        <dbReference type="ChEBI" id="CHEBI:52639"/>
        <dbReference type="EC" id="1.14.19.17"/>
    </reaction>
</comment>
<comment type="catalytic activity">
    <reaction evidence="2">
        <text>N-octanoylsphinganine + 2 Fe(II)-[cytochrome b5] + O2 + 2 H(+) = N-octanoyl-4-hydroxysphinganine + 2 Fe(III)-[cytochrome b5] + H2O</text>
        <dbReference type="Rhea" id="RHEA:43116"/>
        <dbReference type="Rhea" id="RHEA-COMP:10438"/>
        <dbReference type="Rhea" id="RHEA-COMP:10439"/>
        <dbReference type="ChEBI" id="CHEBI:15377"/>
        <dbReference type="ChEBI" id="CHEBI:15378"/>
        <dbReference type="ChEBI" id="CHEBI:15379"/>
        <dbReference type="ChEBI" id="CHEBI:29033"/>
        <dbReference type="ChEBI" id="CHEBI:29034"/>
        <dbReference type="ChEBI" id="CHEBI:82841"/>
        <dbReference type="ChEBI" id="CHEBI:82842"/>
    </reaction>
    <physiologicalReaction direction="left-to-right" evidence="2">
        <dbReference type="Rhea" id="RHEA:43117"/>
    </physiologicalReaction>
</comment>
<comment type="catalytic activity">
    <reaction evidence="2">
        <text>an N-acylsphinganine + 2 Fe(II)-[cytochrome b5] + O2 + 2 H(+) = an N-acyl-(4R)-4-hydroxysphinganine + 2 Fe(III)-[cytochrome b5] + H2O</text>
        <dbReference type="Rhea" id="RHEA:46364"/>
        <dbReference type="Rhea" id="RHEA-COMP:10438"/>
        <dbReference type="Rhea" id="RHEA-COMP:10439"/>
        <dbReference type="ChEBI" id="CHEBI:15377"/>
        <dbReference type="ChEBI" id="CHEBI:15378"/>
        <dbReference type="ChEBI" id="CHEBI:15379"/>
        <dbReference type="ChEBI" id="CHEBI:29033"/>
        <dbReference type="ChEBI" id="CHEBI:29034"/>
        <dbReference type="ChEBI" id="CHEBI:31488"/>
        <dbReference type="ChEBI" id="CHEBI:31998"/>
        <dbReference type="EC" id="1.14.18.5"/>
    </reaction>
    <physiologicalReaction direction="left-to-right" evidence="2">
        <dbReference type="Rhea" id="RHEA:46365"/>
    </physiologicalReaction>
</comment>
<comment type="pathway">
    <text>Membrane lipid metabolism; sphingolipid biosynthesis.</text>
</comment>
<comment type="subcellular location">
    <subcellularLocation>
        <location evidence="3">Endoplasmic reticulum membrane</location>
        <topology evidence="3">Multi-pass membrane protein</topology>
    </subcellularLocation>
</comment>
<comment type="similarity">
    <text evidence="5">Belongs to the fatty acid desaturase type 1 family. DEGS subfamily.</text>
</comment>
<gene>
    <name evidence="3" type="primary">DEGS2</name>
</gene>
<sequence>MGNRAGRSDFEWVYTDQPHTQRRKEMLAKYPAIKALMRPDPYLKWTVTAMVLAQLLACWLAQGLAWRWLFFWAYAFGGCVNHSLTLAIHDISHNTAFGTGRPSRNRWFAIFANLPVGLPYAASFKKYHVDHHRYLGGDGLDVDVPTYFEGRLFCTPARKLLWLALQPFFYTLRPLCVHPKAMTRMELCNTLVQLAADATIYALWGLKPMVYLLASSLLGLGLHPISGHFVAEHYMFLKGHETYSYYGPLNWITFNVGYHMEHHDFPSIPSCNLPLVRKIAPEYYDHLPQHHSWVKVLWDFVFDDSLGPFARVKRVCKLAENRL</sequence>
<feature type="initiator methionine" description="Removed" evidence="1">
    <location>
        <position position="1"/>
    </location>
</feature>
<feature type="chain" id="PRO_0000312815" description="Sphingolipid delta(4)-desaturase/C4-monooxygenase DES2" evidence="1">
    <location>
        <begin position="2"/>
        <end position="323"/>
    </location>
</feature>
<feature type="transmembrane region" description="Helical" evidence="4">
    <location>
        <begin position="45"/>
        <end position="65"/>
    </location>
</feature>
<feature type="transmembrane region" description="Helical" evidence="4">
    <location>
        <begin position="68"/>
        <end position="88"/>
    </location>
</feature>
<feature type="transmembrane region" description="Helical" evidence="4">
    <location>
        <begin position="209"/>
        <end position="231"/>
    </location>
</feature>
<feature type="region of interest" description="Required for C4-hydroxylase activity" evidence="3">
    <location>
        <begin position="95"/>
        <end position="99"/>
    </location>
</feature>
<feature type="short sequence motif" description="Histidine box-1" evidence="5">
    <location>
        <begin position="89"/>
        <end position="93"/>
    </location>
</feature>
<feature type="short sequence motif" description="Histidine box-2" evidence="5">
    <location>
        <begin position="128"/>
        <end position="132"/>
    </location>
</feature>
<feature type="short sequence motif" description="Histidine box-3" evidence="5">
    <location>
        <begin position="259"/>
        <end position="263"/>
    </location>
</feature>
<feature type="lipid moiety-binding region" description="N-myristoyl glycine" evidence="1">
    <location>
        <position position="2"/>
    </location>
</feature>
<name>DEGS2_BOVIN</name>
<protein>
    <recommendedName>
        <fullName>Sphingolipid delta(4)-desaturase/C4-monooxygenase DES2</fullName>
        <ecNumber>1.14.18.5</ecNumber>
        <ecNumber>1.14.19.17</ecNumber>
    </recommendedName>
    <alternativeName>
        <fullName>Degenerative spermatocyte homolog 2</fullName>
    </alternativeName>
    <alternativeName>
        <fullName>Sphingolipid 4-desaturase</fullName>
    </alternativeName>
    <alternativeName>
        <fullName>Sphingolipid C4-monooxygenase</fullName>
    </alternativeName>
</protein>
<accession>Q0II71</accession>